<reference key="1">
    <citation type="submission" date="2003-10" db="EMBL/GenBank/DDBJ databases">
        <title>The complete genome sequence of the alkaliphilic Bacillus clausii KSM-K16.</title>
        <authorList>
            <person name="Takaki Y."/>
            <person name="Kageyama Y."/>
            <person name="Shimamura S."/>
            <person name="Suzuki H."/>
            <person name="Nishi S."/>
            <person name="Hatada Y."/>
            <person name="Kawai S."/>
            <person name="Ito S."/>
            <person name="Horikoshi K."/>
        </authorList>
    </citation>
    <scope>NUCLEOTIDE SEQUENCE [LARGE SCALE GENOMIC DNA]</scope>
    <source>
        <strain>KSM-K16</strain>
    </source>
</reference>
<gene>
    <name evidence="1" type="primary">thiE</name>
    <name type="ordered locus">ABC1733</name>
</gene>
<feature type="chain" id="PRO_1000008129" description="Thiamine-phosphate synthase">
    <location>
        <begin position="1"/>
        <end position="209"/>
    </location>
</feature>
<feature type="binding site" evidence="1">
    <location>
        <begin position="36"/>
        <end position="40"/>
    </location>
    <ligand>
        <name>4-amino-2-methyl-5-(diphosphooxymethyl)pyrimidine</name>
        <dbReference type="ChEBI" id="CHEBI:57841"/>
    </ligand>
</feature>
<feature type="binding site" evidence="1">
    <location>
        <position position="68"/>
    </location>
    <ligand>
        <name>4-amino-2-methyl-5-(diphosphooxymethyl)pyrimidine</name>
        <dbReference type="ChEBI" id="CHEBI:57841"/>
    </ligand>
</feature>
<feature type="binding site" evidence="1">
    <location>
        <position position="69"/>
    </location>
    <ligand>
        <name>Mg(2+)</name>
        <dbReference type="ChEBI" id="CHEBI:18420"/>
    </ligand>
</feature>
<feature type="binding site" evidence="1">
    <location>
        <position position="88"/>
    </location>
    <ligand>
        <name>Mg(2+)</name>
        <dbReference type="ChEBI" id="CHEBI:18420"/>
    </ligand>
</feature>
<feature type="binding site" evidence="1">
    <location>
        <position position="107"/>
    </location>
    <ligand>
        <name>4-amino-2-methyl-5-(diphosphooxymethyl)pyrimidine</name>
        <dbReference type="ChEBI" id="CHEBI:57841"/>
    </ligand>
</feature>
<feature type="binding site" evidence="1">
    <location>
        <begin position="133"/>
        <end position="135"/>
    </location>
    <ligand>
        <name>2-[(2R,5Z)-2-carboxy-4-methylthiazol-5(2H)-ylidene]ethyl phosphate</name>
        <dbReference type="ChEBI" id="CHEBI:62899"/>
    </ligand>
</feature>
<feature type="binding site" evidence="1">
    <location>
        <position position="136"/>
    </location>
    <ligand>
        <name>4-amino-2-methyl-5-(diphosphooxymethyl)pyrimidine</name>
        <dbReference type="ChEBI" id="CHEBI:57841"/>
    </ligand>
</feature>
<feature type="binding site" evidence="1">
    <location>
        <position position="164"/>
    </location>
    <ligand>
        <name>2-[(2R,5Z)-2-carboxy-4-methylthiazol-5(2H)-ylidene]ethyl phosphate</name>
        <dbReference type="ChEBI" id="CHEBI:62899"/>
    </ligand>
</feature>
<feature type="binding site" evidence="1">
    <location>
        <begin position="184"/>
        <end position="185"/>
    </location>
    <ligand>
        <name>2-[(2R,5Z)-2-carboxy-4-methylthiazol-5(2H)-ylidene]ethyl phosphate</name>
        <dbReference type="ChEBI" id="CHEBI:62899"/>
    </ligand>
</feature>
<name>THIE_SHOC1</name>
<evidence type="ECO:0000255" key="1">
    <source>
        <dbReference type="HAMAP-Rule" id="MF_00097"/>
    </source>
</evidence>
<organism>
    <name type="scientific">Shouchella clausii (strain KSM-K16)</name>
    <name type="common">Alkalihalobacillus clausii</name>
    <dbReference type="NCBI Taxonomy" id="66692"/>
    <lineage>
        <taxon>Bacteria</taxon>
        <taxon>Bacillati</taxon>
        <taxon>Bacillota</taxon>
        <taxon>Bacilli</taxon>
        <taxon>Bacillales</taxon>
        <taxon>Bacillaceae</taxon>
        <taxon>Shouchella</taxon>
    </lineage>
</organism>
<comment type="function">
    <text evidence="1">Condenses 4-methyl-5-(beta-hydroxyethyl)thiazole monophosphate (THZ-P) and 2-methyl-4-amino-5-hydroxymethyl pyrimidine pyrophosphate (HMP-PP) to form thiamine monophosphate (TMP).</text>
</comment>
<comment type="catalytic activity">
    <reaction evidence="1">
        <text>2-[(2R,5Z)-2-carboxy-4-methylthiazol-5(2H)-ylidene]ethyl phosphate + 4-amino-2-methyl-5-(diphosphooxymethyl)pyrimidine + 2 H(+) = thiamine phosphate + CO2 + diphosphate</text>
        <dbReference type="Rhea" id="RHEA:47844"/>
        <dbReference type="ChEBI" id="CHEBI:15378"/>
        <dbReference type="ChEBI" id="CHEBI:16526"/>
        <dbReference type="ChEBI" id="CHEBI:33019"/>
        <dbReference type="ChEBI" id="CHEBI:37575"/>
        <dbReference type="ChEBI" id="CHEBI:57841"/>
        <dbReference type="ChEBI" id="CHEBI:62899"/>
        <dbReference type="EC" id="2.5.1.3"/>
    </reaction>
</comment>
<comment type="catalytic activity">
    <reaction evidence="1">
        <text>2-(2-carboxy-4-methylthiazol-5-yl)ethyl phosphate + 4-amino-2-methyl-5-(diphosphooxymethyl)pyrimidine + 2 H(+) = thiamine phosphate + CO2 + diphosphate</text>
        <dbReference type="Rhea" id="RHEA:47848"/>
        <dbReference type="ChEBI" id="CHEBI:15378"/>
        <dbReference type="ChEBI" id="CHEBI:16526"/>
        <dbReference type="ChEBI" id="CHEBI:33019"/>
        <dbReference type="ChEBI" id="CHEBI:37575"/>
        <dbReference type="ChEBI" id="CHEBI:57841"/>
        <dbReference type="ChEBI" id="CHEBI:62890"/>
        <dbReference type="EC" id="2.5.1.3"/>
    </reaction>
</comment>
<comment type="catalytic activity">
    <reaction evidence="1">
        <text>4-methyl-5-(2-phosphooxyethyl)-thiazole + 4-amino-2-methyl-5-(diphosphooxymethyl)pyrimidine + H(+) = thiamine phosphate + diphosphate</text>
        <dbReference type="Rhea" id="RHEA:22328"/>
        <dbReference type="ChEBI" id="CHEBI:15378"/>
        <dbReference type="ChEBI" id="CHEBI:33019"/>
        <dbReference type="ChEBI" id="CHEBI:37575"/>
        <dbReference type="ChEBI" id="CHEBI:57841"/>
        <dbReference type="ChEBI" id="CHEBI:58296"/>
        <dbReference type="EC" id="2.5.1.3"/>
    </reaction>
</comment>
<comment type="cofactor">
    <cofactor evidence="1">
        <name>Mg(2+)</name>
        <dbReference type="ChEBI" id="CHEBI:18420"/>
    </cofactor>
    <text evidence="1">Binds 1 Mg(2+) ion per subunit.</text>
</comment>
<comment type="pathway">
    <text evidence="1">Cofactor biosynthesis; thiamine diphosphate biosynthesis; thiamine phosphate from 4-amino-2-methyl-5-diphosphomethylpyrimidine and 4-methyl-5-(2-phosphoethyl)-thiazole: step 1/1.</text>
</comment>
<comment type="similarity">
    <text evidence="1">Belongs to the thiamine-phosphate synthase family.</text>
</comment>
<proteinExistence type="inferred from homology"/>
<keyword id="KW-0460">Magnesium</keyword>
<keyword id="KW-0479">Metal-binding</keyword>
<keyword id="KW-1185">Reference proteome</keyword>
<keyword id="KW-0784">Thiamine biosynthesis</keyword>
<keyword id="KW-0808">Transferase</keyword>
<sequence length="209" mass="22579">MKPFRLYAITGEEFHPGRDVVEVMEEAIQGGVDIIQLRDKTSSKKAVLEKARRLKKLAADYGIPFIVNDHIDVALAVDASGVHVGQDDLPLPEVRKLLGPDKIIGVSTHKLEEALEAEKNGADYIGVGPIFPTNSKADVVDPVTTAYIREVKEHVTIPFVAIGGIKRHNVREVIEAGAEAICVITEIVAARDVKAASQALLAAMEEASQ</sequence>
<accession>Q5WH87</accession>
<protein>
    <recommendedName>
        <fullName evidence="1">Thiamine-phosphate synthase</fullName>
        <shortName evidence="1">TP synthase</shortName>
        <shortName evidence="1">TPS</shortName>
        <ecNumber evidence="1">2.5.1.3</ecNumber>
    </recommendedName>
    <alternativeName>
        <fullName evidence="1">Thiamine-phosphate pyrophosphorylase</fullName>
        <shortName evidence="1">TMP pyrophosphorylase</shortName>
        <shortName evidence="1">TMP-PPase</shortName>
    </alternativeName>
</protein>
<dbReference type="EC" id="2.5.1.3" evidence="1"/>
<dbReference type="EMBL" id="AP006627">
    <property type="protein sequence ID" value="BAD64268.1"/>
    <property type="molecule type" value="Genomic_DNA"/>
</dbReference>
<dbReference type="RefSeq" id="WP_011246576.1">
    <property type="nucleotide sequence ID" value="NC_006582.1"/>
</dbReference>
<dbReference type="SMR" id="Q5WH87"/>
<dbReference type="STRING" id="66692.ABC1733"/>
<dbReference type="KEGG" id="bcl:ABC1733"/>
<dbReference type="eggNOG" id="COG0352">
    <property type="taxonomic scope" value="Bacteria"/>
</dbReference>
<dbReference type="HOGENOM" id="CLU_018272_3_2_9"/>
<dbReference type="OrthoDB" id="9812206at2"/>
<dbReference type="UniPathway" id="UPA00060">
    <property type="reaction ID" value="UER00141"/>
</dbReference>
<dbReference type="Proteomes" id="UP000001168">
    <property type="component" value="Chromosome"/>
</dbReference>
<dbReference type="GO" id="GO:0005737">
    <property type="term" value="C:cytoplasm"/>
    <property type="evidence" value="ECO:0007669"/>
    <property type="project" value="TreeGrafter"/>
</dbReference>
<dbReference type="GO" id="GO:0000287">
    <property type="term" value="F:magnesium ion binding"/>
    <property type="evidence" value="ECO:0007669"/>
    <property type="project" value="UniProtKB-UniRule"/>
</dbReference>
<dbReference type="GO" id="GO:0004789">
    <property type="term" value="F:thiamine-phosphate diphosphorylase activity"/>
    <property type="evidence" value="ECO:0007669"/>
    <property type="project" value="UniProtKB-UniRule"/>
</dbReference>
<dbReference type="GO" id="GO:0009228">
    <property type="term" value="P:thiamine biosynthetic process"/>
    <property type="evidence" value="ECO:0007669"/>
    <property type="project" value="UniProtKB-KW"/>
</dbReference>
<dbReference type="GO" id="GO:0009229">
    <property type="term" value="P:thiamine diphosphate biosynthetic process"/>
    <property type="evidence" value="ECO:0007669"/>
    <property type="project" value="UniProtKB-UniRule"/>
</dbReference>
<dbReference type="CDD" id="cd00564">
    <property type="entry name" value="TMP_TenI"/>
    <property type="match status" value="1"/>
</dbReference>
<dbReference type="FunFam" id="3.20.20.70:FF:000096">
    <property type="entry name" value="Thiamine-phosphate synthase"/>
    <property type="match status" value="1"/>
</dbReference>
<dbReference type="Gene3D" id="3.20.20.70">
    <property type="entry name" value="Aldolase class I"/>
    <property type="match status" value="1"/>
</dbReference>
<dbReference type="HAMAP" id="MF_00097">
    <property type="entry name" value="TMP_synthase"/>
    <property type="match status" value="1"/>
</dbReference>
<dbReference type="InterPro" id="IPR013785">
    <property type="entry name" value="Aldolase_TIM"/>
</dbReference>
<dbReference type="InterPro" id="IPR036206">
    <property type="entry name" value="ThiamineP_synth_sf"/>
</dbReference>
<dbReference type="InterPro" id="IPR022998">
    <property type="entry name" value="ThiamineP_synth_TenI"/>
</dbReference>
<dbReference type="InterPro" id="IPR034291">
    <property type="entry name" value="TMP_synthase"/>
</dbReference>
<dbReference type="NCBIfam" id="TIGR00693">
    <property type="entry name" value="thiE"/>
    <property type="match status" value="1"/>
</dbReference>
<dbReference type="PANTHER" id="PTHR20857">
    <property type="entry name" value="THIAMINE-PHOSPHATE PYROPHOSPHORYLASE"/>
    <property type="match status" value="1"/>
</dbReference>
<dbReference type="PANTHER" id="PTHR20857:SF15">
    <property type="entry name" value="THIAMINE-PHOSPHATE SYNTHASE"/>
    <property type="match status" value="1"/>
</dbReference>
<dbReference type="Pfam" id="PF02581">
    <property type="entry name" value="TMP-TENI"/>
    <property type="match status" value="1"/>
</dbReference>
<dbReference type="SUPFAM" id="SSF51391">
    <property type="entry name" value="Thiamin phosphate synthase"/>
    <property type="match status" value="1"/>
</dbReference>